<accession>P02148</accession>
<accession>Q5RB95</accession>
<organism>
    <name type="scientific">Pongo pygmaeus</name>
    <name type="common">Bornean orangutan</name>
    <dbReference type="NCBI Taxonomy" id="9600"/>
    <lineage>
        <taxon>Eukaryota</taxon>
        <taxon>Metazoa</taxon>
        <taxon>Chordata</taxon>
        <taxon>Craniata</taxon>
        <taxon>Vertebrata</taxon>
        <taxon>Euteleostomi</taxon>
        <taxon>Mammalia</taxon>
        <taxon>Eutheria</taxon>
        <taxon>Euarchontoglires</taxon>
        <taxon>Primates</taxon>
        <taxon>Haplorrhini</taxon>
        <taxon>Catarrhini</taxon>
        <taxon>Hominidae</taxon>
        <taxon>Pongo</taxon>
    </lineage>
</organism>
<proteinExistence type="evidence at protein level"/>
<name>MYG_PONPY</name>
<feature type="initiator methionine" description="Removed" evidence="8">
    <location>
        <position position="1"/>
    </location>
</feature>
<feature type="chain" id="PRO_0000053337" description="Myoglobin">
    <location>
        <begin position="2"/>
        <end position="154"/>
    </location>
</feature>
<feature type="domain" description="Globin" evidence="7">
    <location>
        <begin position="2"/>
        <end position="148"/>
    </location>
</feature>
<feature type="binding site" evidence="5">
    <location>
        <position position="65"/>
    </location>
    <ligand>
        <name>nitrite</name>
        <dbReference type="ChEBI" id="CHEBI:16301"/>
    </ligand>
</feature>
<feature type="binding site" evidence="3 7">
    <location>
        <position position="65"/>
    </location>
    <ligand>
        <name>O2</name>
        <dbReference type="ChEBI" id="CHEBI:15379"/>
    </ligand>
</feature>
<feature type="binding site" description="proximal binding residue" evidence="1">
    <location>
        <position position="94"/>
    </location>
    <ligand>
        <name>heme b</name>
        <dbReference type="ChEBI" id="CHEBI:60344"/>
    </ligand>
    <ligandPart>
        <name>Fe</name>
        <dbReference type="ChEBI" id="CHEBI:18248"/>
    </ligandPart>
</feature>
<feature type="modified residue" description="Phosphoserine" evidence="6">
    <location>
        <position position="4"/>
    </location>
</feature>
<feature type="modified residue" description="Phosphothreonine" evidence="4">
    <location>
        <position position="68"/>
    </location>
</feature>
<comment type="function">
    <text evidence="1">Monomeric heme protein which primary function is to store oxygen and facilitate its diffusion within muscle tissues. Reversibly binds oxygen through a pentacoordinated heme iron and enables its timely and efficient release as needed during periods of heightened demand. Depending on the oxidative conditions of tissues and cells, and in addition to its ability to bind oxygen, it also has a nitrite reductase activity whereby it regulates the production of bioactive nitric oxide. Under stress conditions, like hypoxia and anoxia, it also protects cells against reactive oxygen species thanks to its pseudoperoxidase activity.</text>
</comment>
<comment type="catalytic activity">
    <reaction evidence="1">
        <text>Fe(III)-heme b-[protein] + nitric oxide + H2O = Fe(II)-heme b-[protein] + nitrite + 2 H(+)</text>
        <dbReference type="Rhea" id="RHEA:77711"/>
        <dbReference type="Rhea" id="RHEA-COMP:18975"/>
        <dbReference type="Rhea" id="RHEA-COMP:18976"/>
        <dbReference type="ChEBI" id="CHEBI:15377"/>
        <dbReference type="ChEBI" id="CHEBI:15378"/>
        <dbReference type="ChEBI" id="CHEBI:16301"/>
        <dbReference type="ChEBI" id="CHEBI:16480"/>
        <dbReference type="ChEBI" id="CHEBI:55376"/>
        <dbReference type="ChEBI" id="CHEBI:60344"/>
    </reaction>
    <physiologicalReaction direction="right-to-left" evidence="1">
        <dbReference type="Rhea" id="RHEA:77713"/>
    </physiologicalReaction>
</comment>
<comment type="catalytic activity">
    <reaction evidence="1">
        <text>H2O2 + AH2 = A + 2 H2O</text>
        <dbReference type="Rhea" id="RHEA:30275"/>
        <dbReference type="ChEBI" id="CHEBI:13193"/>
        <dbReference type="ChEBI" id="CHEBI:15377"/>
        <dbReference type="ChEBI" id="CHEBI:16240"/>
        <dbReference type="ChEBI" id="CHEBI:17499"/>
    </reaction>
</comment>
<comment type="subunit">
    <text evidence="2">Monomeric.</text>
</comment>
<comment type="subcellular location">
    <subcellularLocation>
        <location evidence="1">Cytoplasm</location>
        <location evidence="1">Sarcoplasm</location>
    </subcellularLocation>
</comment>
<comment type="similarity">
    <text evidence="7">Belongs to the globin family.</text>
</comment>
<sequence length="154" mass="17198">MGLSDGEWQLVLNVWGKVEADIPSHGQEVLIRLFKGHPETLEKFDKFKHLKSEDEMKASEDLKKHGATVLTALGGILKKKGHHEAEIKPLAQSHATKHKIPVKYLEFISESIIQVLQSKHPGDFGADAQGAMNKALELFRKDMASNYKELGFQG</sequence>
<protein>
    <recommendedName>
        <fullName>Myoglobin</fullName>
    </recommendedName>
    <alternativeName>
        <fullName evidence="1">Nitrite reductase MB</fullName>
        <ecNumber evidence="1">1.7.-.-</ecNumber>
    </alternativeName>
    <alternativeName>
        <fullName evidence="1">Pseudoperoxidase MB</fullName>
        <ecNumber evidence="1">1.11.1.-</ecNumber>
    </alternativeName>
</protein>
<evidence type="ECO:0000250" key="1">
    <source>
        <dbReference type="UniProtKB" id="P02144"/>
    </source>
</evidence>
<evidence type="ECO:0000250" key="2">
    <source>
        <dbReference type="UniProtKB" id="P02185"/>
    </source>
</evidence>
<evidence type="ECO:0000250" key="3">
    <source>
        <dbReference type="UniProtKB" id="P02189"/>
    </source>
</evidence>
<evidence type="ECO:0000250" key="4">
    <source>
        <dbReference type="UniProtKB" id="P04247"/>
    </source>
</evidence>
<evidence type="ECO:0000250" key="5">
    <source>
        <dbReference type="UniProtKB" id="P68082"/>
    </source>
</evidence>
<evidence type="ECO:0000250" key="6">
    <source>
        <dbReference type="UniProtKB" id="Q9QZ76"/>
    </source>
</evidence>
<evidence type="ECO:0000255" key="7">
    <source>
        <dbReference type="PROSITE-ProRule" id="PRU00238"/>
    </source>
</evidence>
<evidence type="ECO:0000269" key="8">
    <source>
    </source>
</evidence>
<reference key="1">
    <citation type="submission" date="2004-11" db="EMBL/GenBank/DDBJ databases">
        <authorList>
            <consortium name="The German cDNA consortium"/>
        </authorList>
    </citation>
    <scope>NUCLEOTIDE SEQUENCE [LARGE SCALE MRNA]</scope>
    <source>
        <tissue>Heart</tissue>
    </source>
</reference>
<reference key="2">
    <citation type="journal article" date="1976" name="Nature">
        <title>Myoglobin of the orangutan as a phylogenetic enigma.</title>
        <authorList>
            <person name="Romero-Herrera A.E."/>
            <person name="Lehmann H."/>
            <person name="Castillo O."/>
            <person name="Joysey K.A."/>
            <person name="Friday A.E."/>
        </authorList>
    </citation>
    <scope>PROTEIN SEQUENCE OF 2-154</scope>
</reference>
<dbReference type="EC" id="1.7.-.-" evidence="1"/>
<dbReference type="EC" id="1.11.1.-" evidence="1"/>
<dbReference type="EMBL" id="CR858756">
    <property type="protein sequence ID" value="CAH90965.1"/>
    <property type="molecule type" value="mRNA"/>
</dbReference>
<dbReference type="PIR" id="A02468">
    <property type="entry name" value="MYOG"/>
</dbReference>
<dbReference type="RefSeq" id="XP_054326419.1">
    <property type="nucleotide sequence ID" value="XM_054470444.2"/>
</dbReference>
<dbReference type="RefSeq" id="XP_054326420.1">
    <property type="nucleotide sequence ID" value="XM_054470445.2"/>
</dbReference>
<dbReference type="RefSeq" id="XP_054326421.1">
    <property type="nucleotide sequence ID" value="XM_054470446.1"/>
</dbReference>
<dbReference type="SMR" id="P02148"/>
<dbReference type="GeneID" id="129023571"/>
<dbReference type="KEGG" id="pon:100172469"/>
<dbReference type="GO" id="GO:0070062">
    <property type="term" value="C:extracellular exosome"/>
    <property type="evidence" value="ECO:0007669"/>
    <property type="project" value="TreeGrafter"/>
</dbReference>
<dbReference type="GO" id="GO:0016528">
    <property type="term" value="C:sarcoplasm"/>
    <property type="evidence" value="ECO:0000250"/>
    <property type="project" value="UniProtKB"/>
</dbReference>
<dbReference type="GO" id="GO:0020037">
    <property type="term" value="F:heme binding"/>
    <property type="evidence" value="ECO:0007669"/>
    <property type="project" value="InterPro"/>
</dbReference>
<dbReference type="GO" id="GO:0046872">
    <property type="term" value="F:metal ion binding"/>
    <property type="evidence" value="ECO:0007669"/>
    <property type="project" value="UniProtKB-KW"/>
</dbReference>
<dbReference type="GO" id="GO:0098809">
    <property type="term" value="F:nitrite reductase activity"/>
    <property type="evidence" value="ECO:0000250"/>
    <property type="project" value="UniProtKB"/>
</dbReference>
<dbReference type="GO" id="GO:0019825">
    <property type="term" value="F:oxygen binding"/>
    <property type="evidence" value="ECO:0007669"/>
    <property type="project" value="InterPro"/>
</dbReference>
<dbReference type="GO" id="GO:0005344">
    <property type="term" value="F:oxygen carrier activity"/>
    <property type="evidence" value="ECO:0000250"/>
    <property type="project" value="UniProtKB"/>
</dbReference>
<dbReference type="GO" id="GO:0004601">
    <property type="term" value="F:peroxidase activity"/>
    <property type="evidence" value="ECO:0000250"/>
    <property type="project" value="UniProtKB"/>
</dbReference>
<dbReference type="GO" id="GO:0019430">
    <property type="term" value="P:removal of superoxide radicals"/>
    <property type="evidence" value="ECO:0000250"/>
    <property type="project" value="UniProtKB"/>
</dbReference>
<dbReference type="CDD" id="cd08926">
    <property type="entry name" value="Mb"/>
    <property type="match status" value="1"/>
</dbReference>
<dbReference type="Gene3D" id="6.10.140.2100">
    <property type="match status" value="1"/>
</dbReference>
<dbReference type="Gene3D" id="6.10.140.2110">
    <property type="match status" value="1"/>
</dbReference>
<dbReference type="InterPro" id="IPR000971">
    <property type="entry name" value="Globin"/>
</dbReference>
<dbReference type="InterPro" id="IPR009050">
    <property type="entry name" value="Globin-like_sf"/>
</dbReference>
<dbReference type="InterPro" id="IPR002335">
    <property type="entry name" value="Myoglobin"/>
</dbReference>
<dbReference type="PANTHER" id="PTHR47132">
    <property type="entry name" value="MYOGLOBIN"/>
    <property type="match status" value="1"/>
</dbReference>
<dbReference type="PANTHER" id="PTHR47132:SF1">
    <property type="entry name" value="MYOGLOBIN"/>
    <property type="match status" value="1"/>
</dbReference>
<dbReference type="Pfam" id="PF00042">
    <property type="entry name" value="Globin"/>
    <property type="match status" value="1"/>
</dbReference>
<dbReference type="PRINTS" id="PR00613">
    <property type="entry name" value="MYOGLOBIN"/>
</dbReference>
<dbReference type="SUPFAM" id="SSF46458">
    <property type="entry name" value="Globin-like"/>
    <property type="match status" value="1"/>
</dbReference>
<dbReference type="PROSITE" id="PS01033">
    <property type="entry name" value="GLOBIN"/>
    <property type="match status" value="1"/>
</dbReference>
<keyword id="KW-0963">Cytoplasm</keyword>
<keyword id="KW-0903">Direct protein sequencing</keyword>
<keyword id="KW-0349">Heme</keyword>
<keyword id="KW-0408">Iron</keyword>
<keyword id="KW-0479">Metal-binding</keyword>
<keyword id="KW-0514">Muscle protein</keyword>
<keyword id="KW-0560">Oxidoreductase</keyword>
<keyword id="KW-0561">Oxygen transport</keyword>
<keyword id="KW-0597">Phosphoprotein</keyword>
<keyword id="KW-0813">Transport</keyword>
<gene>
    <name type="primary">MB</name>
</gene>